<comment type="function">
    <text evidence="1">Part of the ABC transporter complex OppABCDF involved in the uptake of oligopeptides (By similarity). Probably responsible for energy coupling to the transport system (By similarity).</text>
</comment>
<comment type="catalytic activity">
    <reaction evidence="1">
        <text>a [peptide](out) + ATP + H2O = a [peptide](in) + ADP + phosphate + H(+)</text>
        <dbReference type="Rhea" id="RHEA:78459"/>
        <dbReference type="Rhea" id="RHEA-COMP:19083"/>
        <dbReference type="ChEBI" id="CHEBI:15377"/>
        <dbReference type="ChEBI" id="CHEBI:15378"/>
        <dbReference type="ChEBI" id="CHEBI:30616"/>
        <dbReference type="ChEBI" id="CHEBI:33710"/>
        <dbReference type="ChEBI" id="CHEBI:43474"/>
        <dbReference type="ChEBI" id="CHEBI:456216"/>
        <dbReference type="EC" id="7.4.2.6"/>
    </reaction>
    <physiologicalReaction direction="left-to-right" evidence="1">
        <dbReference type="Rhea" id="RHEA:78460"/>
    </physiologicalReaction>
</comment>
<comment type="subunit">
    <text evidence="1">The complex is composed of two ATP-binding proteins (OppD and OppF), two transmembrane proteins (OppB and OppC) and a solute-binding protein (OppA).</text>
</comment>
<comment type="subcellular location">
    <subcellularLocation>
        <location evidence="1">Cell membrane</location>
        <topology evidence="1">Peripheral membrane protein</topology>
    </subcellularLocation>
</comment>
<comment type="similarity">
    <text evidence="3">Belongs to the ABC transporter superfamily.</text>
</comment>
<accession>P47325</accession>
<evidence type="ECO:0000250" key="1">
    <source>
        <dbReference type="UniProtKB" id="P24136"/>
    </source>
</evidence>
<evidence type="ECO:0000255" key="2">
    <source>
        <dbReference type="PROSITE-ProRule" id="PRU00434"/>
    </source>
</evidence>
<evidence type="ECO:0000305" key="3"/>
<organism>
    <name type="scientific">Mycoplasma genitalium (strain ATCC 33530 / DSM 19775 / NCTC 10195 / G37)</name>
    <name type="common">Mycoplasmoides genitalium</name>
    <dbReference type="NCBI Taxonomy" id="243273"/>
    <lineage>
        <taxon>Bacteria</taxon>
        <taxon>Bacillati</taxon>
        <taxon>Mycoplasmatota</taxon>
        <taxon>Mycoplasmoidales</taxon>
        <taxon>Mycoplasmoidaceae</taxon>
        <taxon>Mycoplasmoides</taxon>
    </lineage>
</organism>
<sequence length="402" mass="45494">MALKRSNFFVDKDQQLKDNLILDITDLHVNFKVKDGILHAVRGIDLKVERGSIVGIVGESGSGKSVSVKSIIGFNDNAQTKAKLMNFKNVDITKLKKHQWKYYRGTYVSYISQDPLFSLNPTMTIGKQVKEAIYVASKRRYFQAKSDLKFALSNKEIDKKTYKSKLKEIKQTYQQKIKPINVEKKTLEILQFIGINDAKKRLKAFPSEFSGGMRQRIVIAIAVATEPDLIIADEPTTALDVTIQAKVLTLIKQLRDLLNITIIFISHNISLIANFCDFVYVMYAGKIVEQGLVEEIFTNPLHPYTWALISSIPEQKDKNKPLTSIPGVIPNMLTPPKGDAFASRNQYALAIDFEYHPPFFEVTKTHKAATWLLHPQAPKVEPPQAVIDNITLTKKALQFKDQ</sequence>
<name>OPPD_MYCGE</name>
<gene>
    <name type="primary">oppD</name>
    <name type="ordered locus">MG079</name>
</gene>
<dbReference type="EC" id="7.4.2.6" evidence="1"/>
<dbReference type="EMBL" id="L43967">
    <property type="protein sequence ID" value="AAC71297.1"/>
    <property type="molecule type" value="Genomic_DNA"/>
</dbReference>
<dbReference type="PIR" id="G64208">
    <property type="entry name" value="G64208"/>
</dbReference>
<dbReference type="RefSeq" id="WP_010869322.1">
    <property type="nucleotide sequence ID" value="NC_000908.2"/>
</dbReference>
<dbReference type="SMR" id="P47325"/>
<dbReference type="FunCoup" id="P47325">
    <property type="interactions" value="120"/>
</dbReference>
<dbReference type="STRING" id="243273.MG_079"/>
<dbReference type="GeneID" id="88282202"/>
<dbReference type="KEGG" id="mge:MG_079"/>
<dbReference type="eggNOG" id="COG0444">
    <property type="taxonomic scope" value="Bacteria"/>
</dbReference>
<dbReference type="HOGENOM" id="CLU_000604_1_23_14"/>
<dbReference type="InParanoid" id="P47325"/>
<dbReference type="OrthoDB" id="9806285at2"/>
<dbReference type="BioCyc" id="MGEN243273:G1GJ2-91-MONOMER"/>
<dbReference type="Proteomes" id="UP000000807">
    <property type="component" value="Chromosome"/>
</dbReference>
<dbReference type="GO" id="GO:0005886">
    <property type="term" value="C:plasma membrane"/>
    <property type="evidence" value="ECO:0007669"/>
    <property type="project" value="UniProtKB-SubCell"/>
</dbReference>
<dbReference type="GO" id="GO:0005524">
    <property type="term" value="F:ATP binding"/>
    <property type="evidence" value="ECO:0007669"/>
    <property type="project" value="UniProtKB-KW"/>
</dbReference>
<dbReference type="GO" id="GO:0016887">
    <property type="term" value="F:ATP hydrolysis activity"/>
    <property type="evidence" value="ECO:0007669"/>
    <property type="project" value="InterPro"/>
</dbReference>
<dbReference type="GO" id="GO:0015833">
    <property type="term" value="P:peptide transport"/>
    <property type="evidence" value="ECO:0007669"/>
    <property type="project" value="UniProtKB-KW"/>
</dbReference>
<dbReference type="GO" id="GO:0015031">
    <property type="term" value="P:protein transport"/>
    <property type="evidence" value="ECO:0007669"/>
    <property type="project" value="UniProtKB-KW"/>
</dbReference>
<dbReference type="CDD" id="cd03257">
    <property type="entry name" value="ABC_NikE_OppD_transporters"/>
    <property type="match status" value="1"/>
</dbReference>
<dbReference type="Gene3D" id="3.40.50.300">
    <property type="entry name" value="P-loop containing nucleotide triphosphate hydrolases"/>
    <property type="match status" value="1"/>
</dbReference>
<dbReference type="InterPro" id="IPR003593">
    <property type="entry name" value="AAA+_ATPase"/>
</dbReference>
<dbReference type="InterPro" id="IPR050388">
    <property type="entry name" value="ABC_Ni/Peptide_Import"/>
</dbReference>
<dbReference type="InterPro" id="IPR003439">
    <property type="entry name" value="ABC_transporter-like_ATP-bd"/>
</dbReference>
<dbReference type="InterPro" id="IPR017871">
    <property type="entry name" value="ABC_transporter-like_CS"/>
</dbReference>
<dbReference type="InterPro" id="IPR013563">
    <property type="entry name" value="Oligopep_ABC_C"/>
</dbReference>
<dbReference type="InterPro" id="IPR027417">
    <property type="entry name" value="P-loop_NTPase"/>
</dbReference>
<dbReference type="NCBIfam" id="TIGR01727">
    <property type="entry name" value="oligo_HPY"/>
    <property type="match status" value="1"/>
</dbReference>
<dbReference type="PANTHER" id="PTHR43297:SF2">
    <property type="entry name" value="DIPEPTIDE TRANSPORT ATP-BINDING PROTEIN DPPD"/>
    <property type="match status" value="1"/>
</dbReference>
<dbReference type="PANTHER" id="PTHR43297">
    <property type="entry name" value="OLIGOPEPTIDE TRANSPORT ATP-BINDING PROTEIN APPD"/>
    <property type="match status" value="1"/>
</dbReference>
<dbReference type="Pfam" id="PF00005">
    <property type="entry name" value="ABC_tran"/>
    <property type="match status" value="1"/>
</dbReference>
<dbReference type="Pfam" id="PF08352">
    <property type="entry name" value="oligo_HPY"/>
    <property type="match status" value="1"/>
</dbReference>
<dbReference type="SMART" id="SM00382">
    <property type="entry name" value="AAA"/>
    <property type="match status" value="1"/>
</dbReference>
<dbReference type="SUPFAM" id="SSF52540">
    <property type="entry name" value="P-loop containing nucleoside triphosphate hydrolases"/>
    <property type="match status" value="1"/>
</dbReference>
<dbReference type="PROSITE" id="PS00211">
    <property type="entry name" value="ABC_TRANSPORTER_1"/>
    <property type="match status" value="1"/>
</dbReference>
<dbReference type="PROSITE" id="PS50893">
    <property type="entry name" value="ABC_TRANSPORTER_2"/>
    <property type="match status" value="1"/>
</dbReference>
<keyword id="KW-0067">ATP-binding</keyword>
<keyword id="KW-1003">Cell membrane</keyword>
<keyword id="KW-0472">Membrane</keyword>
<keyword id="KW-0547">Nucleotide-binding</keyword>
<keyword id="KW-0571">Peptide transport</keyword>
<keyword id="KW-0653">Protein transport</keyword>
<keyword id="KW-1185">Reference proteome</keyword>
<keyword id="KW-1278">Translocase</keyword>
<keyword id="KW-0813">Transport</keyword>
<feature type="chain" id="PRO_0000092656" description="Oligopeptide transport ATP-binding protein OppD">
    <location>
        <begin position="1"/>
        <end position="402"/>
    </location>
</feature>
<feature type="domain" description="ABC transporter" evidence="2">
    <location>
        <begin position="22"/>
        <end position="309"/>
    </location>
</feature>
<feature type="binding site" evidence="2">
    <location>
        <begin position="58"/>
        <end position="65"/>
    </location>
    <ligand>
        <name>ATP</name>
        <dbReference type="ChEBI" id="CHEBI:30616"/>
    </ligand>
</feature>
<reference key="1">
    <citation type="journal article" date="1995" name="Science">
        <title>The minimal gene complement of Mycoplasma genitalium.</title>
        <authorList>
            <person name="Fraser C.M."/>
            <person name="Gocayne J.D."/>
            <person name="White O."/>
            <person name="Adams M.D."/>
            <person name="Clayton R.A."/>
            <person name="Fleischmann R.D."/>
            <person name="Bult C.J."/>
            <person name="Kerlavage A.R."/>
            <person name="Sutton G.G."/>
            <person name="Kelley J.M."/>
            <person name="Fritchman J.L."/>
            <person name="Weidman J.F."/>
            <person name="Small K.V."/>
            <person name="Sandusky M."/>
            <person name="Fuhrmann J.L."/>
            <person name="Nguyen D.T."/>
            <person name="Utterback T.R."/>
            <person name="Saudek D.M."/>
            <person name="Phillips C.A."/>
            <person name="Merrick J.M."/>
            <person name="Tomb J.-F."/>
            <person name="Dougherty B.A."/>
            <person name="Bott K.F."/>
            <person name="Hu P.-C."/>
            <person name="Lucier T.S."/>
            <person name="Peterson S.N."/>
            <person name="Smith H.O."/>
            <person name="Hutchison C.A. III"/>
            <person name="Venter J.C."/>
        </authorList>
    </citation>
    <scope>NUCLEOTIDE SEQUENCE [LARGE SCALE GENOMIC DNA]</scope>
    <source>
        <strain>ATCC 33530 / DSM 19775 / NCTC 10195 / G37</strain>
    </source>
</reference>
<proteinExistence type="inferred from homology"/>
<protein>
    <recommendedName>
        <fullName evidence="3">Oligopeptide transport ATP-binding protein OppD</fullName>
        <ecNumber evidence="1">7.4.2.6</ecNumber>
    </recommendedName>
</protein>